<organism>
    <name type="scientific">Heliobacterium modesticaldum (strain ATCC 51547 / Ice1)</name>
    <dbReference type="NCBI Taxonomy" id="498761"/>
    <lineage>
        <taxon>Bacteria</taxon>
        <taxon>Bacillati</taxon>
        <taxon>Bacillota</taxon>
        <taxon>Clostridia</taxon>
        <taxon>Eubacteriales</taxon>
        <taxon>Heliobacteriaceae</taxon>
        <taxon>Heliomicrobium</taxon>
    </lineage>
</organism>
<protein>
    <recommendedName>
        <fullName evidence="1">Serine--tRNA ligase</fullName>
        <ecNumber evidence="1">6.1.1.11</ecNumber>
    </recommendedName>
    <alternativeName>
        <fullName evidence="1">Seryl-tRNA synthetase</fullName>
        <shortName evidence="1">SerRS</shortName>
    </alternativeName>
    <alternativeName>
        <fullName evidence="1">Seryl-tRNA(Ser/Sec) synthetase</fullName>
    </alternativeName>
</protein>
<gene>
    <name evidence="1" type="primary">serS</name>
    <name type="ordered locus">Helmi_10860</name>
    <name type="ORF">HM1_0850</name>
</gene>
<keyword id="KW-0030">Aminoacyl-tRNA synthetase</keyword>
<keyword id="KW-0067">ATP-binding</keyword>
<keyword id="KW-0963">Cytoplasm</keyword>
<keyword id="KW-0436">Ligase</keyword>
<keyword id="KW-0547">Nucleotide-binding</keyword>
<keyword id="KW-0648">Protein biosynthesis</keyword>
<keyword id="KW-1185">Reference proteome</keyword>
<name>SYS_HELMI</name>
<sequence length="422" mass="47316">MLDTKFVRANPEAVQEALQKRGANISLDDFLELDRRRRALVVEVESLKAKRNAVSAEIARRKKAKEDAEALIAEMRQVGDQIKALDDELTRIELDMDNRMLYIPNIPHASVPVGTSEEDNVEVRRWGTPRTFDFPVKAHWDIGEDLNILDFQRGAKISGARFTVYKGLGARLERAVINLMMDTHAQRGYTEVLPPYLVNRQSMLGTGQLPKFAEDMFAVAGTDYYLIPTAEVPVTNLYTNEILDADKLPIHHCAYSACFRAEAGAAGRDTRGLIRQHQFNKVELVKFTRPENSYDELEKLTKDAEHILQLLGLPYRVITLCTGDMGFSAAKTYDIEVWLPSFGAYREISSCSNFEDFQARRANIRFRPSPKAKPEFVHTLNGSGLAVGRTVAAILENCQQPDGSVVIPEALRPYMGVDVIGG</sequence>
<accession>B0TAQ9</accession>
<proteinExistence type="inferred from homology"/>
<comment type="function">
    <text evidence="1">Catalyzes the attachment of serine to tRNA(Ser). Is also able to aminoacylate tRNA(Sec) with serine, to form the misacylated tRNA L-seryl-tRNA(Sec), which will be further converted into selenocysteinyl-tRNA(Sec).</text>
</comment>
<comment type="catalytic activity">
    <reaction evidence="1">
        <text>tRNA(Ser) + L-serine + ATP = L-seryl-tRNA(Ser) + AMP + diphosphate + H(+)</text>
        <dbReference type="Rhea" id="RHEA:12292"/>
        <dbReference type="Rhea" id="RHEA-COMP:9669"/>
        <dbReference type="Rhea" id="RHEA-COMP:9703"/>
        <dbReference type="ChEBI" id="CHEBI:15378"/>
        <dbReference type="ChEBI" id="CHEBI:30616"/>
        <dbReference type="ChEBI" id="CHEBI:33019"/>
        <dbReference type="ChEBI" id="CHEBI:33384"/>
        <dbReference type="ChEBI" id="CHEBI:78442"/>
        <dbReference type="ChEBI" id="CHEBI:78533"/>
        <dbReference type="ChEBI" id="CHEBI:456215"/>
        <dbReference type="EC" id="6.1.1.11"/>
    </reaction>
</comment>
<comment type="catalytic activity">
    <reaction evidence="1">
        <text>tRNA(Sec) + L-serine + ATP = L-seryl-tRNA(Sec) + AMP + diphosphate + H(+)</text>
        <dbReference type="Rhea" id="RHEA:42580"/>
        <dbReference type="Rhea" id="RHEA-COMP:9742"/>
        <dbReference type="Rhea" id="RHEA-COMP:10128"/>
        <dbReference type="ChEBI" id="CHEBI:15378"/>
        <dbReference type="ChEBI" id="CHEBI:30616"/>
        <dbReference type="ChEBI" id="CHEBI:33019"/>
        <dbReference type="ChEBI" id="CHEBI:33384"/>
        <dbReference type="ChEBI" id="CHEBI:78442"/>
        <dbReference type="ChEBI" id="CHEBI:78533"/>
        <dbReference type="ChEBI" id="CHEBI:456215"/>
        <dbReference type="EC" id="6.1.1.11"/>
    </reaction>
</comment>
<comment type="pathway">
    <text evidence="1">Aminoacyl-tRNA biosynthesis; selenocysteinyl-tRNA(Sec) biosynthesis; L-seryl-tRNA(Sec) from L-serine and tRNA(Sec): step 1/1.</text>
</comment>
<comment type="subunit">
    <text evidence="1">Homodimer. The tRNA molecule binds across the dimer.</text>
</comment>
<comment type="subcellular location">
    <subcellularLocation>
        <location evidence="1">Cytoplasm</location>
    </subcellularLocation>
</comment>
<comment type="domain">
    <text evidence="1">Consists of two distinct domains, a catalytic core and a N-terminal extension that is involved in tRNA binding.</text>
</comment>
<comment type="similarity">
    <text evidence="1">Belongs to the class-II aminoacyl-tRNA synthetase family. Type-1 seryl-tRNA synthetase subfamily.</text>
</comment>
<reference key="1">
    <citation type="journal article" date="2008" name="J. Bacteriol.">
        <title>The genome of Heliobacterium modesticaldum, a phototrophic representative of the Firmicutes containing the simplest photosynthetic apparatus.</title>
        <authorList>
            <person name="Sattley W.M."/>
            <person name="Madigan M.T."/>
            <person name="Swingley W.D."/>
            <person name="Cheung P.C."/>
            <person name="Clocksin K.M."/>
            <person name="Conrad A.L."/>
            <person name="Dejesa L.C."/>
            <person name="Honchak B.M."/>
            <person name="Jung D.O."/>
            <person name="Karbach L.E."/>
            <person name="Kurdoglu A."/>
            <person name="Lahiri S."/>
            <person name="Mastrian S.D."/>
            <person name="Page L.E."/>
            <person name="Taylor H.L."/>
            <person name="Wang Z.T."/>
            <person name="Raymond J."/>
            <person name="Chen M."/>
            <person name="Blankenship R.E."/>
            <person name="Touchman J.W."/>
        </authorList>
    </citation>
    <scope>NUCLEOTIDE SEQUENCE [LARGE SCALE GENOMIC DNA]</scope>
    <source>
        <strain>ATCC 51547 / Ice1</strain>
    </source>
</reference>
<dbReference type="EC" id="6.1.1.11" evidence="1"/>
<dbReference type="EMBL" id="CP000930">
    <property type="protein sequence ID" value="ABZ83711.1"/>
    <property type="molecule type" value="Genomic_DNA"/>
</dbReference>
<dbReference type="RefSeq" id="WP_012282234.1">
    <property type="nucleotide sequence ID" value="NC_010337.2"/>
</dbReference>
<dbReference type="SMR" id="B0TAQ9"/>
<dbReference type="STRING" id="498761.HM1_0850"/>
<dbReference type="KEGG" id="hmo:HM1_0850"/>
<dbReference type="eggNOG" id="COG0172">
    <property type="taxonomic scope" value="Bacteria"/>
</dbReference>
<dbReference type="HOGENOM" id="CLU_023797_1_1_9"/>
<dbReference type="OrthoDB" id="9804647at2"/>
<dbReference type="UniPathway" id="UPA00906">
    <property type="reaction ID" value="UER00895"/>
</dbReference>
<dbReference type="Proteomes" id="UP000008550">
    <property type="component" value="Chromosome"/>
</dbReference>
<dbReference type="GO" id="GO:0005737">
    <property type="term" value="C:cytoplasm"/>
    <property type="evidence" value="ECO:0007669"/>
    <property type="project" value="UniProtKB-SubCell"/>
</dbReference>
<dbReference type="GO" id="GO:0005524">
    <property type="term" value="F:ATP binding"/>
    <property type="evidence" value="ECO:0007669"/>
    <property type="project" value="UniProtKB-UniRule"/>
</dbReference>
<dbReference type="GO" id="GO:0140096">
    <property type="term" value="F:catalytic activity, acting on a protein"/>
    <property type="evidence" value="ECO:0007669"/>
    <property type="project" value="UniProtKB-ARBA"/>
</dbReference>
<dbReference type="GO" id="GO:0004828">
    <property type="term" value="F:serine-tRNA ligase activity"/>
    <property type="evidence" value="ECO:0007669"/>
    <property type="project" value="UniProtKB-UniRule"/>
</dbReference>
<dbReference type="GO" id="GO:0016740">
    <property type="term" value="F:transferase activity"/>
    <property type="evidence" value="ECO:0007669"/>
    <property type="project" value="UniProtKB-ARBA"/>
</dbReference>
<dbReference type="GO" id="GO:0016260">
    <property type="term" value="P:selenocysteine biosynthetic process"/>
    <property type="evidence" value="ECO:0007669"/>
    <property type="project" value="UniProtKB-UniRule"/>
</dbReference>
<dbReference type="GO" id="GO:0006434">
    <property type="term" value="P:seryl-tRNA aminoacylation"/>
    <property type="evidence" value="ECO:0007669"/>
    <property type="project" value="UniProtKB-UniRule"/>
</dbReference>
<dbReference type="CDD" id="cd00770">
    <property type="entry name" value="SerRS_core"/>
    <property type="match status" value="1"/>
</dbReference>
<dbReference type="Gene3D" id="3.30.930.10">
    <property type="entry name" value="Bira Bifunctional Protein, Domain 2"/>
    <property type="match status" value="1"/>
</dbReference>
<dbReference type="Gene3D" id="1.10.287.40">
    <property type="entry name" value="Serine-tRNA synthetase, tRNA binding domain"/>
    <property type="match status" value="1"/>
</dbReference>
<dbReference type="HAMAP" id="MF_00176">
    <property type="entry name" value="Ser_tRNA_synth_type1"/>
    <property type="match status" value="1"/>
</dbReference>
<dbReference type="InterPro" id="IPR002314">
    <property type="entry name" value="aa-tRNA-synt_IIb"/>
</dbReference>
<dbReference type="InterPro" id="IPR006195">
    <property type="entry name" value="aa-tRNA-synth_II"/>
</dbReference>
<dbReference type="InterPro" id="IPR045864">
    <property type="entry name" value="aa-tRNA-synth_II/BPL/LPL"/>
</dbReference>
<dbReference type="InterPro" id="IPR002317">
    <property type="entry name" value="Ser-tRNA-ligase_type_1"/>
</dbReference>
<dbReference type="InterPro" id="IPR015866">
    <property type="entry name" value="Ser-tRNA-synth_1_N"/>
</dbReference>
<dbReference type="InterPro" id="IPR042103">
    <property type="entry name" value="SerRS_1_N_sf"/>
</dbReference>
<dbReference type="InterPro" id="IPR033729">
    <property type="entry name" value="SerRS_core"/>
</dbReference>
<dbReference type="InterPro" id="IPR010978">
    <property type="entry name" value="tRNA-bd_arm"/>
</dbReference>
<dbReference type="NCBIfam" id="TIGR00414">
    <property type="entry name" value="serS"/>
    <property type="match status" value="1"/>
</dbReference>
<dbReference type="PANTHER" id="PTHR43697:SF1">
    <property type="entry name" value="SERINE--TRNA LIGASE"/>
    <property type="match status" value="1"/>
</dbReference>
<dbReference type="PANTHER" id="PTHR43697">
    <property type="entry name" value="SERYL-TRNA SYNTHETASE"/>
    <property type="match status" value="1"/>
</dbReference>
<dbReference type="Pfam" id="PF02403">
    <property type="entry name" value="Seryl_tRNA_N"/>
    <property type="match status" value="1"/>
</dbReference>
<dbReference type="Pfam" id="PF00587">
    <property type="entry name" value="tRNA-synt_2b"/>
    <property type="match status" value="1"/>
</dbReference>
<dbReference type="PIRSF" id="PIRSF001529">
    <property type="entry name" value="Ser-tRNA-synth_IIa"/>
    <property type="match status" value="1"/>
</dbReference>
<dbReference type="PRINTS" id="PR00981">
    <property type="entry name" value="TRNASYNTHSER"/>
</dbReference>
<dbReference type="SUPFAM" id="SSF55681">
    <property type="entry name" value="Class II aaRS and biotin synthetases"/>
    <property type="match status" value="1"/>
</dbReference>
<dbReference type="SUPFAM" id="SSF46589">
    <property type="entry name" value="tRNA-binding arm"/>
    <property type="match status" value="1"/>
</dbReference>
<dbReference type="PROSITE" id="PS50862">
    <property type="entry name" value="AA_TRNA_LIGASE_II"/>
    <property type="match status" value="1"/>
</dbReference>
<evidence type="ECO:0000255" key="1">
    <source>
        <dbReference type="HAMAP-Rule" id="MF_00176"/>
    </source>
</evidence>
<feature type="chain" id="PRO_1000098074" description="Serine--tRNA ligase">
    <location>
        <begin position="1"/>
        <end position="422"/>
    </location>
</feature>
<feature type="binding site" evidence="1">
    <location>
        <begin position="229"/>
        <end position="231"/>
    </location>
    <ligand>
        <name>L-serine</name>
        <dbReference type="ChEBI" id="CHEBI:33384"/>
    </ligand>
</feature>
<feature type="binding site" evidence="1">
    <location>
        <begin position="260"/>
        <end position="262"/>
    </location>
    <ligand>
        <name>ATP</name>
        <dbReference type="ChEBI" id="CHEBI:30616"/>
    </ligand>
</feature>
<feature type="binding site" evidence="1">
    <location>
        <position position="283"/>
    </location>
    <ligand>
        <name>L-serine</name>
        <dbReference type="ChEBI" id="CHEBI:33384"/>
    </ligand>
</feature>
<feature type="binding site" evidence="1">
    <location>
        <begin position="347"/>
        <end position="350"/>
    </location>
    <ligand>
        <name>ATP</name>
        <dbReference type="ChEBI" id="CHEBI:30616"/>
    </ligand>
</feature>
<feature type="binding site" evidence="1">
    <location>
        <position position="383"/>
    </location>
    <ligand>
        <name>L-serine</name>
        <dbReference type="ChEBI" id="CHEBI:33384"/>
    </ligand>
</feature>